<dbReference type="EMBL" id="M37308">
    <property type="protein sequence ID" value="AAA26459.1"/>
    <property type="molecule type" value="Genomic_DNA"/>
</dbReference>
<dbReference type="EMBL" id="X12757">
    <property type="protein sequence ID" value="CAA31250.1"/>
    <property type="molecule type" value="Genomic_DNA"/>
</dbReference>
<dbReference type="PIR" id="S01151">
    <property type="entry name" value="S01151"/>
</dbReference>
<dbReference type="SMR" id="P15017"/>
<dbReference type="GO" id="GO:0003677">
    <property type="term" value="F:DNA binding"/>
    <property type="evidence" value="ECO:0007669"/>
    <property type="project" value="UniProtKB-KW"/>
</dbReference>
<dbReference type="CDD" id="cd00093">
    <property type="entry name" value="HTH_XRE"/>
    <property type="match status" value="1"/>
</dbReference>
<dbReference type="Gene3D" id="1.10.260.40">
    <property type="entry name" value="lambda repressor-like DNA-binding domains"/>
    <property type="match status" value="1"/>
</dbReference>
<dbReference type="InterPro" id="IPR001387">
    <property type="entry name" value="Cro/C1-type_HTH"/>
</dbReference>
<dbReference type="InterPro" id="IPR010982">
    <property type="entry name" value="Lambda_DNA-bd_dom_sf"/>
</dbReference>
<dbReference type="Pfam" id="PF01381">
    <property type="entry name" value="HTH_3"/>
    <property type="match status" value="1"/>
</dbReference>
<dbReference type="SMART" id="SM00530">
    <property type="entry name" value="HTH_XRE"/>
    <property type="match status" value="1"/>
</dbReference>
<dbReference type="SUPFAM" id="SSF47413">
    <property type="entry name" value="lambda repressor-like DNA-binding domains"/>
    <property type="match status" value="1"/>
</dbReference>
<dbReference type="PROSITE" id="PS50943">
    <property type="entry name" value="HTH_CROC1"/>
    <property type="match status" value="1"/>
</dbReference>
<evidence type="ECO:0000255" key="1">
    <source>
        <dbReference type="PROSITE-ProRule" id="PRU00257"/>
    </source>
</evidence>
<organism>
    <name type="scientific">Rhodospirillum rubrum</name>
    <dbReference type="NCBI Taxonomy" id="1085"/>
    <lineage>
        <taxon>Bacteria</taxon>
        <taxon>Pseudomonadati</taxon>
        <taxon>Pseudomonadota</taxon>
        <taxon>Alphaproteobacteria</taxon>
        <taxon>Rhodospirillales</taxon>
        <taxon>Rhodospirillaceae</taxon>
        <taxon>Rhodospirillum</taxon>
    </lineage>
</organism>
<proteinExistence type="predicted"/>
<accession>P15017</accession>
<name>DNU4_RHORU</name>
<sequence>MPESDTRTIHHVDAHVGQRVRQRRTALILDQETLARRIGVSFQQIQKYERGRNRISASRLYDIAKALAVPIDYFFSDLERGDPRHDGLWPRTWGAWPKAGAPRPIRCA</sequence>
<keyword id="KW-0238">DNA-binding</keyword>
<keyword id="KW-0804">Transcription</keyword>
<keyword id="KW-0805">Transcription regulation</keyword>
<reference key="1">
    <citation type="journal article" date="1988" name="Biochem. J.">
        <title>DNA sequence of a gene cluster coding for subunits of the F0 membrane sector of ATP synthase in Rhodospirillum rubrum. Support for modular evolution of the F1 and F0 sectors.</title>
        <authorList>
            <person name="Falk G."/>
            <person name="Walker J.E."/>
        </authorList>
    </citation>
    <scope>NUCLEOTIDE SEQUENCE [GENOMIC DNA]</scope>
</reference>
<protein>
    <recommendedName>
        <fullName>Uncharacterized transcriptional regulator in ATPase CF(0) region</fullName>
    </recommendedName>
    <alternativeName>
        <fullName>URF4</fullName>
    </alternativeName>
</protein>
<feature type="chain" id="PRO_0000149747" description="Uncharacterized transcriptional regulator in ATPase CF(0) region">
    <location>
        <begin position="1"/>
        <end position="108"/>
    </location>
</feature>
<feature type="domain" description="HTH cro/C1-type" evidence="1">
    <location>
        <begin position="20"/>
        <end position="74"/>
    </location>
</feature>
<feature type="DNA-binding region" description="H-T-H motif" evidence="1">
    <location>
        <begin position="31"/>
        <end position="50"/>
    </location>
</feature>